<proteinExistence type="inferred from homology"/>
<feature type="chain" id="PRO_0000331987" description="Chaperonin GroEL 1">
    <location>
        <begin position="1"/>
        <end position="546"/>
    </location>
</feature>
<feature type="region of interest" description="Disordered" evidence="2">
    <location>
        <begin position="526"/>
        <end position="546"/>
    </location>
</feature>
<feature type="compositionally biased region" description="Gly residues" evidence="2">
    <location>
        <begin position="534"/>
        <end position="546"/>
    </location>
</feature>
<feature type="binding site" evidence="1">
    <location>
        <begin position="30"/>
        <end position="33"/>
    </location>
    <ligand>
        <name>ATP</name>
        <dbReference type="ChEBI" id="CHEBI:30616"/>
    </ligand>
</feature>
<feature type="binding site" evidence="1">
    <location>
        <position position="51"/>
    </location>
    <ligand>
        <name>ATP</name>
        <dbReference type="ChEBI" id="CHEBI:30616"/>
    </ligand>
</feature>
<feature type="binding site" evidence="1">
    <location>
        <begin position="87"/>
        <end position="91"/>
    </location>
    <ligand>
        <name>ATP</name>
        <dbReference type="ChEBI" id="CHEBI:30616"/>
    </ligand>
</feature>
<feature type="binding site" evidence="1">
    <location>
        <position position="415"/>
    </location>
    <ligand>
        <name>ATP</name>
        <dbReference type="ChEBI" id="CHEBI:30616"/>
    </ligand>
</feature>
<feature type="binding site" evidence="1">
    <location>
        <begin position="479"/>
        <end position="481"/>
    </location>
    <ligand>
        <name>ATP</name>
        <dbReference type="ChEBI" id="CHEBI:30616"/>
    </ligand>
</feature>
<feature type="binding site" evidence="1">
    <location>
        <position position="495"/>
    </location>
    <ligand>
        <name>ATP</name>
        <dbReference type="ChEBI" id="CHEBI:30616"/>
    </ligand>
</feature>
<keyword id="KW-0067">ATP-binding</keyword>
<keyword id="KW-0143">Chaperone</keyword>
<keyword id="KW-0963">Cytoplasm</keyword>
<keyword id="KW-0413">Isomerase</keyword>
<keyword id="KW-0547">Nucleotide-binding</keyword>
<comment type="function">
    <text evidence="1">Together with its co-chaperonin GroES, plays an essential role in assisting protein folding. The GroEL-GroES system forms a nano-cage that allows encapsulation of the non-native substrate proteins and provides a physical environment optimized to promote and accelerate protein folding.</text>
</comment>
<comment type="catalytic activity">
    <reaction evidence="1">
        <text>ATP + H2O + a folded polypeptide = ADP + phosphate + an unfolded polypeptide.</text>
        <dbReference type="EC" id="5.6.1.7"/>
    </reaction>
</comment>
<comment type="subunit">
    <text evidence="1">Forms a cylinder of 14 subunits composed of two heptameric rings stacked back-to-back. Interacts with the co-chaperonin GroES.</text>
</comment>
<comment type="subcellular location">
    <subcellularLocation>
        <location evidence="1">Cytoplasm</location>
    </subcellularLocation>
</comment>
<comment type="similarity">
    <text evidence="1">Belongs to the chaperonin (HSP60) family.</text>
</comment>
<sequence>MAAKDVVFGDSARAKMVEGVNILANAVKVTLGPKGRNVVLERSFGGPTVTKDGVSVAKEIELKDKLQNMGAQMVKEVASKTSDNAGDGTTTATVLAQSIVREGMKYVASGMNPMDLKRGIDKAVAAAVEELKKISKPCTTNKEIAQVGAISANSDSSIGDRIAEAMDKVGKEGVITVEDGKSLADELDVVEGMQFDRGYLSPYFINNPDKQVAVLENPFVLLHDKKVSNIRDLLPVLEQVAKAGRPLLIIAEDVEGEALATLVVNNIRGILKTVAVKAPGFGDRRKAMLEDIAILTGGQVIAEETGLTLEKATLAELGQAKRIEVGKENTTIIDGAGEAVNIEARVKQIRTQIEEATSDYDREKLQERVAKLAGGVAVIKVGAATEVEMKEKKARVEDALHATRAAVEEGIVPGGGVALIRARTAIASLTGVNADQNAGIKIVLRAMEEPLRQIVTNGGEEASVVVAAVAAGKGNYGYNAATGEYVDMVEAGVVDPTKVTRTALQNAASVAGLLLTTDAAVAELPKEDAPMPGGMPGGMGGMGMDM</sequence>
<name>CH601_BURP0</name>
<protein>
    <recommendedName>
        <fullName evidence="1">Chaperonin GroEL 1</fullName>
        <ecNumber evidence="1">5.6.1.7</ecNumber>
    </recommendedName>
    <alternativeName>
        <fullName evidence="1">60 kDa chaperonin 1</fullName>
    </alternativeName>
    <alternativeName>
        <fullName evidence="1">Chaperonin-60 1</fullName>
        <shortName evidence="1">Cpn60 1</shortName>
    </alternativeName>
</protein>
<accession>A3NYH0</accession>
<dbReference type="EC" id="5.6.1.7" evidence="1"/>
<dbReference type="EMBL" id="CP000572">
    <property type="protein sequence ID" value="ABN90060.1"/>
    <property type="molecule type" value="Genomic_DNA"/>
</dbReference>
<dbReference type="SMR" id="A3NYH0"/>
<dbReference type="KEGG" id="bpl:BURPS1106A_3153"/>
<dbReference type="HOGENOM" id="CLU_016503_3_0_4"/>
<dbReference type="Proteomes" id="UP000006738">
    <property type="component" value="Chromosome I"/>
</dbReference>
<dbReference type="GO" id="GO:0005737">
    <property type="term" value="C:cytoplasm"/>
    <property type="evidence" value="ECO:0007669"/>
    <property type="project" value="UniProtKB-SubCell"/>
</dbReference>
<dbReference type="GO" id="GO:0005524">
    <property type="term" value="F:ATP binding"/>
    <property type="evidence" value="ECO:0007669"/>
    <property type="project" value="UniProtKB-UniRule"/>
</dbReference>
<dbReference type="GO" id="GO:0140662">
    <property type="term" value="F:ATP-dependent protein folding chaperone"/>
    <property type="evidence" value="ECO:0007669"/>
    <property type="project" value="InterPro"/>
</dbReference>
<dbReference type="GO" id="GO:0016853">
    <property type="term" value="F:isomerase activity"/>
    <property type="evidence" value="ECO:0007669"/>
    <property type="project" value="UniProtKB-KW"/>
</dbReference>
<dbReference type="GO" id="GO:0051082">
    <property type="term" value="F:unfolded protein binding"/>
    <property type="evidence" value="ECO:0007669"/>
    <property type="project" value="UniProtKB-UniRule"/>
</dbReference>
<dbReference type="GO" id="GO:0042026">
    <property type="term" value="P:protein refolding"/>
    <property type="evidence" value="ECO:0007669"/>
    <property type="project" value="UniProtKB-UniRule"/>
</dbReference>
<dbReference type="CDD" id="cd03344">
    <property type="entry name" value="GroEL"/>
    <property type="match status" value="1"/>
</dbReference>
<dbReference type="FunFam" id="1.10.560.10:FF:000001">
    <property type="entry name" value="60 kDa chaperonin"/>
    <property type="match status" value="1"/>
</dbReference>
<dbReference type="FunFam" id="3.50.7.10:FF:000001">
    <property type="entry name" value="60 kDa chaperonin"/>
    <property type="match status" value="1"/>
</dbReference>
<dbReference type="Gene3D" id="3.50.7.10">
    <property type="entry name" value="GroEL"/>
    <property type="match status" value="1"/>
</dbReference>
<dbReference type="Gene3D" id="1.10.560.10">
    <property type="entry name" value="GroEL-like equatorial domain"/>
    <property type="match status" value="1"/>
</dbReference>
<dbReference type="Gene3D" id="3.30.260.10">
    <property type="entry name" value="TCP-1-like chaperonin intermediate domain"/>
    <property type="match status" value="1"/>
</dbReference>
<dbReference type="HAMAP" id="MF_00600">
    <property type="entry name" value="CH60"/>
    <property type="match status" value="1"/>
</dbReference>
<dbReference type="InterPro" id="IPR018370">
    <property type="entry name" value="Chaperonin_Cpn60_CS"/>
</dbReference>
<dbReference type="InterPro" id="IPR001844">
    <property type="entry name" value="Cpn60/GroEL"/>
</dbReference>
<dbReference type="InterPro" id="IPR002423">
    <property type="entry name" value="Cpn60/GroEL/TCP-1"/>
</dbReference>
<dbReference type="InterPro" id="IPR027409">
    <property type="entry name" value="GroEL-like_apical_dom_sf"/>
</dbReference>
<dbReference type="InterPro" id="IPR027413">
    <property type="entry name" value="GROEL-like_equatorial_sf"/>
</dbReference>
<dbReference type="InterPro" id="IPR027410">
    <property type="entry name" value="TCP-1-like_intermed_sf"/>
</dbReference>
<dbReference type="NCBIfam" id="TIGR02348">
    <property type="entry name" value="GroEL"/>
    <property type="match status" value="1"/>
</dbReference>
<dbReference type="NCBIfam" id="NF000592">
    <property type="entry name" value="PRK00013.1"/>
    <property type="match status" value="1"/>
</dbReference>
<dbReference type="NCBIfam" id="NF009487">
    <property type="entry name" value="PRK12849.1"/>
    <property type="match status" value="1"/>
</dbReference>
<dbReference type="NCBIfam" id="NF009488">
    <property type="entry name" value="PRK12850.1"/>
    <property type="match status" value="1"/>
</dbReference>
<dbReference type="NCBIfam" id="NF009489">
    <property type="entry name" value="PRK12851.1"/>
    <property type="match status" value="1"/>
</dbReference>
<dbReference type="PANTHER" id="PTHR45633">
    <property type="entry name" value="60 KDA HEAT SHOCK PROTEIN, MITOCHONDRIAL"/>
    <property type="match status" value="1"/>
</dbReference>
<dbReference type="Pfam" id="PF00118">
    <property type="entry name" value="Cpn60_TCP1"/>
    <property type="match status" value="1"/>
</dbReference>
<dbReference type="PRINTS" id="PR00298">
    <property type="entry name" value="CHAPERONIN60"/>
</dbReference>
<dbReference type="SUPFAM" id="SSF52029">
    <property type="entry name" value="GroEL apical domain-like"/>
    <property type="match status" value="1"/>
</dbReference>
<dbReference type="SUPFAM" id="SSF48592">
    <property type="entry name" value="GroEL equatorial domain-like"/>
    <property type="match status" value="1"/>
</dbReference>
<dbReference type="SUPFAM" id="SSF54849">
    <property type="entry name" value="GroEL-intermediate domain like"/>
    <property type="match status" value="1"/>
</dbReference>
<dbReference type="PROSITE" id="PS00296">
    <property type="entry name" value="CHAPERONINS_CPN60"/>
    <property type="match status" value="1"/>
</dbReference>
<gene>
    <name evidence="1" type="primary">groEL1</name>
    <name evidence="1" type="synonym">groL1</name>
    <name type="ordered locus">BURPS1106A_3153</name>
</gene>
<reference key="1">
    <citation type="journal article" date="2010" name="Genome Biol. Evol.">
        <title>Continuing evolution of Burkholderia mallei through genome reduction and large-scale rearrangements.</title>
        <authorList>
            <person name="Losada L."/>
            <person name="Ronning C.M."/>
            <person name="DeShazer D."/>
            <person name="Woods D."/>
            <person name="Fedorova N."/>
            <person name="Kim H.S."/>
            <person name="Shabalina S.A."/>
            <person name="Pearson T.R."/>
            <person name="Brinkac L."/>
            <person name="Tan P."/>
            <person name="Nandi T."/>
            <person name="Crabtree J."/>
            <person name="Badger J."/>
            <person name="Beckstrom-Sternberg S."/>
            <person name="Saqib M."/>
            <person name="Schutzer S.E."/>
            <person name="Keim P."/>
            <person name="Nierman W.C."/>
        </authorList>
    </citation>
    <scope>NUCLEOTIDE SEQUENCE [LARGE SCALE GENOMIC DNA]</scope>
    <source>
        <strain>1106a</strain>
    </source>
</reference>
<evidence type="ECO:0000255" key="1">
    <source>
        <dbReference type="HAMAP-Rule" id="MF_00600"/>
    </source>
</evidence>
<evidence type="ECO:0000256" key="2">
    <source>
        <dbReference type="SAM" id="MobiDB-lite"/>
    </source>
</evidence>
<organism>
    <name type="scientific">Burkholderia pseudomallei (strain 1106a)</name>
    <dbReference type="NCBI Taxonomy" id="357348"/>
    <lineage>
        <taxon>Bacteria</taxon>
        <taxon>Pseudomonadati</taxon>
        <taxon>Pseudomonadota</taxon>
        <taxon>Betaproteobacteria</taxon>
        <taxon>Burkholderiales</taxon>
        <taxon>Burkholderiaceae</taxon>
        <taxon>Burkholderia</taxon>
        <taxon>pseudomallei group</taxon>
    </lineage>
</organism>